<name>FKRP_HUMAN</name>
<gene>
    <name evidence="28" type="primary">FKRP</name>
</gene>
<protein>
    <recommendedName>
        <fullName evidence="26">Ribitol 5-phosphate transferase FKRP</fullName>
        <ecNumber evidence="18 21 23">2.7.8.-</ecNumber>
    </recommendedName>
    <alternativeName>
        <fullName evidence="24">Fukutin-related protein</fullName>
    </alternativeName>
    <alternativeName>
        <fullName evidence="25">Ribitol-5-phosphate transferase</fullName>
    </alternativeName>
</protein>
<dbReference type="EC" id="2.7.8.-" evidence="18 21 23"/>
<dbReference type="EMBL" id="AJ314847">
    <property type="protein sequence ID" value="CAC85633.1"/>
    <property type="molecule type" value="mRNA"/>
</dbReference>
<dbReference type="EMBL" id="AK022638">
    <property type="protein sequence ID" value="BAB14146.1"/>
    <property type="molecule type" value="mRNA"/>
</dbReference>
<dbReference type="EMBL" id="AK095497">
    <property type="protein sequence ID" value="BAG53071.1"/>
    <property type="molecule type" value="mRNA"/>
</dbReference>
<dbReference type="EMBL" id="AK291282">
    <property type="protein sequence ID" value="BAF83971.1"/>
    <property type="molecule type" value="mRNA"/>
</dbReference>
<dbReference type="EMBL" id="AC008622">
    <property type="status" value="NOT_ANNOTATED_CDS"/>
    <property type="molecule type" value="Genomic_DNA"/>
</dbReference>
<dbReference type="EMBL" id="CH471126">
    <property type="protein sequence ID" value="EAW57444.1"/>
    <property type="molecule type" value="Genomic_DNA"/>
</dbReference>
<dbReference type="EMBL" id="BC002612">
    <property type="protein sequence ID" value="AAH02612.1"/>
    <property type="molecule type" value="mRNA"/>
</dbReference>
<dbReference type="CCDS" id="CCDS12691.1"/>
<dbReference type="RefSeq" id="NP_001034974.1">
    <property type="nucleotide sequence ID" value="NM_001039885.3"/>
</dbReference>
<dbReference type="RefSeq" id="NP_077277.1">
    <property type="nucleotide sequence ID" value="NM_024301.5"/>
</dbReference>
<dbReference type="RefSeq" id="XP_005259304.1">
    <property type="nucleotide sequence ID" value="XM_005259247.3"/>
</dbReference>
<dbReference type="RefSeq" id="XP_005259305.1">
    <property type="nucleotide sequence ID" value="XM_005259248.3"/>
</dbReference>
<dbReference type="RefSeq" id="XP_005259306.1">
    <property type="nucleotide sequence ID" value="XM_005259249.5"/>
</dbReference>
<dbReference type="RefSeq" id="XP_011525608.1">
    <property type="nucleotide sequence ID" value="XM_011527306.3"/>
</dbReference>
<dbReference type="RefSeq" id="XP_011525609.1">
    <property type="nucleotide sequence ID" value="XM_011527307.2"/>
</dbReference>
<dbReference type="RefSeq" id="XP_016882786.1">
    <property type="nucleotide sequence ID" value="XM_017027297.3"/>
</dbReference>
<dbReference type="RefSeq" id="XP_024307475.1">
    <property type="nucleotide sequence ID" value="XM_024451707.2"/>
</dbReference>
<dbReference type="RefSeq" id="XP_047295377.1">
    <property type="nucleotide sequence ID" value="XM_047439421.1"/>
</dbReference>
<dbReference type="RefSeq" id="XP_047295378.1">
    <property type="nucleotide sequence ID" value="XM_047439422.1"/>
</dbReference>
<dbReference type="RefSeq" id="XP_047295379.1">
    <property type="nucleotide sequence ID" value="XM_047439423.1"/>
</dbReference>
<dbReference type="RefSeq" id="XP_047295380.1">
    <property type="nucleotide sequence ID" value="XM_047439424.1"/>
</dbReference>
<dbReference type="RefSeq" id="XP_047295381.1">
    <property type="nucleotide sequence ID" value="XM_047439425.1"/>
</dbReference>
<dbReference type="RefSeq" id="XP_047295382.1">
    <property type="nucleotide sequence ID" value="XM_047439426.1"/>
</dbReference>
<dbReference type="RefSeq" id="XP_047295383.1">
    <property type="nucleotide sequence ID" value="XM_047439427.1"/>
</dbReference>
<dbReference type="RefSeq" id="XP_047295384.1">
    <property type="nucleotide sequence ID" value="XM_047439428.1"/>
</dbReference>
<dbReference type="RefSeq" id="XP_047295385.1">
    <property type="nucleotide sequence ID" value="XM_047439429.1"/>
</dbReference>
<dbReference type="RefSeq" id="XP_054178094.1">
    <property type="nucleotide sequence ID" value="XM_054322119.1"/>
</dbReference>
<dbReference type="RefSeq" id="XP_054178095.1">
    <property type="nucleotide sequence ID" value="XM_054322120.1"/>
</dbReference>
<dbReference type="RefSeq" id="XP_054178096.1">
    <property type="nucleotide sequence ID" value="XM_054322121.1"/>
</dbReference>
<dbReference type="RefSeq" id="XP_054178097.1">
    <property type="nucleotide sequence ID" value="XM_054322122.1"/>
</dbReference>
<dbReference type="RefSeq" id="XP_054178098.1">
    <property type="nucleotide sequence ID" value="XM_054322123.1"/>
</dbReference>
<dbReference type="RefSeq" id="XP_054178099.1">
    <property type="nucleotide sequence ID" value="XM_054322124.1"/>
</dbReference>
<dbReference type="RefSeq" id="XP_054178100.1">
    <property type="nucleotide sequence ID" value="XM_054322125.1"/>
</dbReference>
<dbReference type="RefSeq" id="XP_054178101.1">
    <property type="nucleotide sequence ID" value="XM_054322126.1"/>
</dbReference>
<dbReference type="RefSeq" id="XP_054178102.1">
    <property type="nucleotide sequence ID" value="XM_054322127.1"/>
</dbReference>
<dbReference type="RefSeq" id="XP_054178103.1">
    <property type="nucleotide sequence ID" value="XM_054322128.1"/>
</dbReference>
<dbReference type="RefSeq" id="XP_054178104.1">
    <property type="nucleotide sequence ID" value="XM_054322129.1"/>
</dbReference>
<dbReference type="RefSeq" id="XP_054178105.1">
    <property type="nucleotide sequence ID" value="XM_054322130.1"/>
</dbReference>
<dbReference type="RefSeq" id="XP_054178106.1">
    <property type="nucleotide sequence ID" value="XM_054322131.1"/>
</dbReference>
<dbReference type="RefSeq" id="XP_054178107.1">
    <property type="nucleotide sequence ID" value="XM_054322132.1"/>
</dbReference>
<dbReference type="RefSeq" id="XP_054178108.1">
    <property type="nucleotide sequence ID" value="XM_054322133.1"/>
</dbReference>
<dbReference type="PDB" id="6KAJ">
    <property type="method" value="X-ray"/>
    <property type="resolution" value="2.22 A"/>
    <property type="chains" value="A/B/C/D=45-495"/>
</dbReference>
<dbReference type="PDB" id="6KAK">
    <property type="method" value="X-ray"/>
    <property type="resolution" value="2.06 A"/>
    <property type="chains" value="A/B/C/D=45-495"/>
</dbReference>
<dbReference type="PDB" id="6KAL">
    <property type="method" value="X-ray"/>
    <property type="resolution" value="2.60 A"/>
    <property type="chains" value="A/B/C/D=45-495"/>
</dbReference>
<dbReference type="PDB" id="6KAM">
    <property type="method" value="X-ray"/>
    <property type="resolution" value="2.46 A"/>
    <property type="chains" value="A/B/C/D=45-495"/>
</dbReference>
<dbReference type="PDB" id="6KAN">
    <property type="method" value="X-ray"/>
    <property type="resolution" value="2.25 A"/>
    <property type="chains" value="A/B/C/D=45-495"/>
</dbReference>
<dbReference type="PDB" id="6L7S">
    <property type="method" value="X-ray"/>
    <property type="resolution" value="2.41 A"/>
    <property type="chains" value="A/B/C/D=45-495"/>
</dbReference>
<dbReference type="PDB" id="6L7T">
    <property type="method" value="X-ray"/>
    <property type="resolution" value="2.41 A"/>
    <property type="chains" value="A/B/C/D=45-495"/>
</dbReference>
<dbReference type="PDB" id="6L7U">
    <property type="method" value="X-ray"/>
    <property type="resolution" value="2.24 A"/>
    <property type="chains" value="A/B/C/D=45-495"/>
</dbReference>
<dbReference type="PDBsum" id="6KAJ"/>
<dbReference type="PDBsum" id="6KAK"/>
<dbReference type="PDBsum" id="6KAL"/>
<dbReference type="PDBsum" id="6KAM"/>
<dbReference type="PDBsum" id="6KAN"/>
<dbReference type="PDBsum" id="6L7S"/>
<dbReference type="PDBsum" id="6L7T"/>
<dbReference type="PDBsum" id="6L7U"/>
<dbReference type="SMR" id="Q9H9S5"/>
<dbReference type="BioGRID" id="122565">
    <property type="interactions" value="43"/>
</dbReference>
<dbReference type="ComplexPortal" id="CPX-7722">
    <property type="entry name" value="Fukutin-FKRP-TMEM5 multienzyme complex"/>
</dbReference>
<dbReference type="FunCoup" id="Q9H9S5">
    <property type="interactions" value="1149"/>
</dbReference>
<dbReference type="IntAct" id="Q9H9S5">
    <property type="interactions" value="36"/>
</dbReference>
<dbReference type="MINT" id="Q9H9S5"/>
<dbReference type="STRING" id="9606.ENSP00000326570"/>
<dbReference type="GlyCosmos" id="Q9H9S5">
    <property type="glycosylation" value="2 sites, No reported glycans"/>
</dbReference>
<dbReference type="GlyGen" id="Q9H9S5">
    <property type="glycosylation" value="4 sites, 2 N-linked glycans (2 sites), 1 O-linked glycan (1 site)"/>
</dbReference>
<dbReference type="iPTMnet" id="Q9H9S5"/>
<dbReference type="PhosphoSitePlus" id="Q9H9S5"/>
<dbReference type="SwissPalm" id="Q9H9S5"/>
<dbReference type="BioMuta" id="FKRP"/>
<dbReference type="DMDM" id="46395992"/>
<dbReference type="jPOST" id="Q9H9S5"/>
<dbReference type="MassIVE" id="Q9H9S5"/>
<dbReference type="PaxDb" id="9606-ENSP00000326570"/>
<dbReference type="PeptideAtlas" id="Q9H9S5"/>
<dbReference type="ProteomicsDB" id="81360"/>
<dbReference type="Pumba" id="Q9H9S5"/>
<dbReference type="Antibodypedia" id="57230">
    <property type="antibodies" value="240 antibodies from 26 providers"/>
</dbReference>
<dbReference type="DNASU" id="79147"/>
<dbReference type="Ensembl" id="ENST00000318584.10">
    <property type="protein sequence ID" value="ENSP00000326570.4"/>
    <property type="gene ID" value="ENSG00000181027.11"/>
</dbReference>
<dbReference type="Ensembl" id="ENST00000391909.7">
    <property type="protein sequence ID" value="ENSP00000375776.2"/>
    <property type="gene ID" value="ENSG00000181027.11"/>
</dbReference>
<dbReference type="GeneID" id="79147"/>
<dbReference type="KEGG" id="hsa:79147"/>
<dbReference type="MANE-Select" id="ENST00000318584.10">
    <property type="protein sequence ID" value="ENSP00000326570.4"/>
    <property type="RefSeq nucleotide sequence ID" value="NM_024301.5"/>
    <property type="RefSeq protein sequence ID" value="NP_077277.1"/>
</dbReference>
<dbReference type="UCSC" id="uc002pfn.3">
    <property type="organism name" value="human"/>
</dbReference>
<dbReference type="AGR" id="HGNC:17997"/>
<dbReference type="CTD" id="79147"/>
<dbReference type="DisGeNET" id="79147"/>
<dbReference type="GeneCards" id="FKRP"/>
<dbReference type="HGNC" id="HGNC:17997">
    <property type="gene designation" value="FKRP"/>
</dbReference>
<dbReference type="HPA" id="ENSG00000181027">
    <property type="expression patterns" value="Low tissue specificity"/>
</dbReference>
<dbReference type="MalaCards" id="FKRP"/>
<dbReference type="MIM" id="606596">
    <property type="type" value="gene"/>
</dbReference>
<dbReference type="MIM" id="606612">
    <property type="type" value="phenotype"/>
</dbReference>
<dbReference type="MIM" id="607155">
    <property type="type" value="phenotype"/>
</dbReference>
<dbReference type="MIM" id="613153">
    <property type="type" value="phenotype"/>
</dbReference>
<dbReference type="neXtProt" id="NX_Q9H9S5"/>
<dbReference type="OpenTargets" id="ENSG00000181027"/>
<dbReference type="Orphanet" id="370959">
    <property type="disease" value="Congenital muscular dystrophy with cerebellar involvement"/>
</dbReference>
<dbReference type="Orphanet" id="370968">
    <property type="disease" value="Congenital muscular dystrophy with intellectual disability"/>
</dbReference>
<dbReference type="Orphanet" id="370980">
    <property type="disease" value="Congenital muscular dystrophy without intellectual disability"/>
</dbReference>
<dbReference type="Orphanet" id="34515">
    <property type="disease" value="FKRP-related limb-girdle muscular dystrophy R9"/>
</dbReference>
<dbReference type="Orphanet" id="588">
    <property type="disease" value="Muscle-eye-brain disease"/>
</dbReference>
<dbReference type="Orphanet" id="899">
    <property type="disease" value="Walker-Warburg syndrome"/>
</dbReference>
<dbReference type="PharmGKB" id="PA134976709"/>
<dbReference type="VEuPathDB" id="HostDB:ENSG00000181027"/>
<dbReference type="eggNOG" id="ENOG502QV4Y">
    <property type="taxonomic scope" value="Eukaryota"/>
</dbReference>
<dbReference type="GeneTree" id="ENSGT00390000017583"/>
<dbReference type="HOGENOM" id="CLU_041755_1_0_1"/>
<dbReference type="InParanoid" id="Q9H9S5"/>
<dbReference type="OMA" id="KEWTATY"/>
<dbReference type="OrthoDB" id="444255at2759"/>
<dbReference type="PAN-GO" id="Q9H9S5">
    <property type="GO annotations" value="2 GO annotations based on evolutionary models"/>
</dbReference>
<dbReference type="PhylomeDB" id="Q9H9S5"/>
<dbReference type="TreeFam" id="TF324064"/>
<dbReference type="BioCyc" id="MetaCyc:ENSG00000181027-MONOMER"/>
<dbReference type="PathwayCommons" id="Q9H9S5"/>
<dbReference type="SignaLink" id="Q9H9S5"/>
<dbReference type="UniPathway" id="UPA00378"/>
<dbReference type="BioGRID-ORCS" id="79147">
    <property type="hits" value="20 hits in 1165 CRISPR screens"/>
</dbReference>
<dbReference type="GenomeRNAi" id="79147"/>
<dbReference type="Pharos" id="Q9H9S5">
    <property type="development level" value="Tbio"/>
</dbReference>
<dbReference type="PRO" id="PR:Q9H9S5"/>
<dbReference type="Proteomes" id="UP000005640">
    <property type="component" value="Chromosome 19"/>
</dbReference>
<dbReference type="RNAct" id="Q9H9S5">
    <property type="molecule type" value="protein"/>
</dbReference>
<dbReference type="Bgee" id="ENSG00000181027">
    <property type="expression patterns" value="Expressed in left ventricle myocardium and 159 other cell types or tissues"/>
</dbReference>
<dbReference type="ExpressionAtlas" id="Q9H9S5">
    <property type="expression patterns" value="baseline and differential"/>
</dbReference>
<dbReference type="GO" id="GO:0005829">
    <property type="term" value="C:cytosol"/>
    <property type="evidence" value="ECO:0000314"/>
    <property type="project" value="HPA"/>
</dbReference>
<dbReference type="GO" id="GO:0005615">
    <property type="term" value="C:extracellular space"/>
    <property type="evidence" value="ECO:0000314"/>
    <property type="project" value="UniProtKB"/>
</dbReference>
<dbReference type="GO" id="GO:0005794">
    <property type="term" value="C:Golgi apparatus"/>
    <property type="evidence" value="ECO:0000314"/>
    <property type="project" value="UniProtKB"/>
</dbReference>
<dbReference type="GO" id="GO:0000139">
    <property type="term" value="C:Golgi membrane"/>
    <property type="evidence" value="ECO:0000314"/>
    <property type="project" value="UniProtKB"/>
</dbReference>
<dbReference type="GO" id="GO:0005654">
    <property type="term" value="C:nucleoplasm"/>
    <property type="evidence" value="ECO:0000314"/>
    <property type="project" value="HPA"/>
</dbReference>
<dbReference type="GO" id="GO:0005791">
    <property type="term" value="C:rough endoplasmic reticulum"/>
    <property type="evidence" value="ECO:0000314"/>
    <property type="project" value="UniProtKB"/>
</dbReference>
<dbReference type="GO" id="GO:0042383">
    <property type="term" value="C:sarcolemma"/>
    <property type="evidence" value="ECO:0007669"/>
    <property type="project" value="UniProtKB-SubCell"/>
</dbReference>
<dbReference type="GO" id="GO:0098723">
    <property type="term" value="C:skeletal muscle myofibril"/>
    <property type="evidence" value="ECO:0007669"/>
    <property type="project" value="Ensembl"/>
</dbReference>
<dbReference type="GO" id="GO:0002162">
    <property type="term" value="F:dystroglycan binding"/>
    <property type="evidence" value="ECO:0007669"/>
    <property type="project" value="Ensembl"/>
</dbReference>
<dbReference type="GO" id="GO:0042802">
    <property type="term" value="F:identical protein binding"/>
    <property type="evidence" value="ECO:0000353"/>
    <property type="project" value="IntAct"/>
</dbReference>
<dbReference type="GO" id="GO:0043236">
    <property type="term" value="F:laminin binding"/>
    <property type="evidence" value="ECO:0007669"/>
    <property type="project" value="Ensembl"/>
</dbReference>
<dbReference type="GO" id="GO:0046872">
    <property type="term" value="F:metal ion binding"/>
    <property type="evidence" value="ECO:0007669"/>
    <property type="project" value="UniProtKB-KW"/>
</dbReference>
<dbReference type="GO" id="GO:0016780">
    <property type="term" value="F:phosphotransferase activity, for other substituted phosphate groups"/>
    <property type="evidence" value="ECO:0000314"/>
    <property type="project" value="UniProtKB"/>
</dbReference>
<dbReference type="GO" id="GO:0007628">
    <property type="term" value="P:adult walking behavior"/>
    <property type="evidence" value="ECO:0007669"/>
    <property type="project" value="Ensembl"/>
</dbReference>
<dbReference type="GO" id="GO:0071711">
    <property type="term" value="P:basement membrane organization"/>
    <property type="evidence" value="ECO:0007669"/>
    <property type="project" value="Ensembl"/>
</dbReference>
<dbReference type="GO" id="GO:0030282">
    <property type="term" value="P:bone mineralization"/>
    <property type="evidence" value="ECO:0007669"/>
    <property type="project" value="Ensembl"/>
</dbReference>
<dbReference type="GO" id="GO:0007420">
    <property type="term" value="P:brain development"/>
    <property type="evidence" value="ECO:0007669"/>
    <property type="project" value="Ensembl"/>
</dbReference>
<dbReference type="GO" id="GO:0043010">
    <property type="term" value="P:camera-type eye development"/>
    <property type="evidence" value="ECO:0007669"/>
    <property type="project" value="Ensembl"/>
</dbReference>
<dbReference type="GO" id="GO:0061448">
    <property type="term" value="P:connective tissue development"/>
    <property type="evidence" value="ECO:0007669"/>
    <property type="project" value="Ensembl"/>
</dbReference>
<dbReference type="GO" id="GO:0097709">
    <property type="term" value="P:connective tissue replacement"/>
    <property type="evidence" value="ECO:0007669"/>
    <property type="project" value="Ensembl"/>
</dbReference>
<dbReference type="GO" id="GO:0006600">
    <property type="term" value="P:creatine metabolic process"/>
    <property type="evidence" value="ECO:0007669"/>
    <property type="project" value="Ensembl"/>
</dbReference>
<dbReference type="GO" id="GO:0060539">
    <property type="term" value="P:diaphragm development"/>
    <property type="evidence" value="ECO:0007669"/>
    <property type="project" value="Ensembl"/>
</dbReference>
<dbReference type="GO" id="GO:0036058">
    <property type="term" value="P:filtration diaphragm assembly"/>
    <property type="evidence" value="ECO:0007669"/>
    <property type="project" value="Ensembl"/>
</dbReference>
<dbReference type="GO" id="GO:0010001">
    <property type="term" value="P:glial cell differentiation"/>
    <property type="evidence" value="ECO:0007669"/>
    <property type="project" value="Ensembl"/>
</dbReference>
<dbReference type="GO" id="GO:0006096">
    <property type="term" value="P:glycolytic process"/>
    <property type="evidence" value="ECO:0007669"/>
    <property type="project" value="Ensembl"/>
</dbReference>
<dbReference type="GO" id="GO:0003007">
    <property type="term" value="P:heart morphogenesis"/>
    <property type="evidence" value="ECO:0007669"/>
    <property type="project" value="Ensembl"/>
</dbReference>
<dbReference type="GO" id="GO:0001701">
    <property type="term" value="P:in utero embryonic development"/>
    <property type="evidence" value="ECO:0007669"/>
    <property type="project" value="Ensembl"/>
</dbReference>
<dbReference type="GO" id="GO:0006954">
    <property type="term" value="P:inflammatory response"/>
    <property type="evidence" value="ECO:0007669"/>
    <property type="project" value="Ensembl"/>
</dbReference>
<dbReference type="GO" id="GO:0006629">
    <property type="term" value="P:lipid metabolic process"/>
    <property type="evidence" value="ECO:0007669"/>
    <property type="project" value="Ensembl"/>
</dbReference>
<dbReference type="GO" id="GO:0051674">
    <property type="term" value="P:localization of cell"/>
    <property type="evidence" value="ECO:0007669"/>
    <property type="project" value="Ensembl"/>
</dbReference>
<dbReference type="GO" id="GO:0035437">
    <property type="term" value="P:maintenance of protein localization in endoplasmic reticulum"/>
    <property type="evidence" value="ECO:0007669"/>
    <property type="project" value="Ensembl"/>
</dbReference>
<dbReference type="GO" id="GO:0006936">
    <property type="term" value="P:muscle contraction"/>
    <property type="evidence" value="ECO:0007669"/>
    <property type="project" value="Ensembl"/>
</dbReference>
<dbReference type="GO" id="GO:0050905">
    <property type="term" value="P:neuromuscular process"/>
    <property type="evidence" value="ECO:0007669"/>
    <property type="project" value="Ensembl"/>
</dbReference>
<dbReference type="GO" id="GO:0001764">
    <property type="term" value="P:neuron migration"/>
    <property type="evidence" value="ECO:0007669"/>
    <property type="project" value="Ensembl"/>
</dbReference>
<dbReference type="GO" id="GO:0072592">
    <property type="term" value="P:oxygen metabolic process"/>
    <property type="evidence" value="ECO:0007669"/>
    <property type="project" value="Ensembl"/>
</dbReference>
<dbReference type="GO" id="GO:0019519">
    <property type="term" value="P:pentitol metabolic process"/>
    <property type="evidence" value="ECO:0007669"/>
    <property type="project" value="Ensembl"/>
</dbReference>
<dbReference type="GO" id="GO:0019321">
    <property type="term" value="P:pentose metabolic process"/>
    <property type="evidence" value="ECO:0007669"/>
    <property type="project" value="Ensembl"/>
</dbReference>
<dbReference type="GO" id="GO:0043491">
    <property type="term" value="P:phosphatidylinositol 3-kinase/protein kinase B signal transduction"/>
    <property type="evidence" value="ECO:0007669"/>
    <property type="project" value="Ensembl"/>
</dbReference>
<dbReference type="GO" id="GO:0017038">
    <property type="term" value="P:protein import"/>
    <property type="evidence" value="ECO:0007669"/>
    <property type="project" value="Ensembl"/>
</dbReference>
<dbReference type="GO" id="GO:0035269">
    <property type="term" value="P:protein O-linked mannosylation"/>
    <property type="evidence" value="ECO:0000315"/>
    <property type="project" value="UniProtKB"/>
</dbReference>
<dbReference type="GO" id="GO:0016485">
    <property type="term" value="P:protein processing"/>
    <property type="evidence" value="ECO:0007669"/>
    <property type="project" value="Ensembl"/>
</dbReference>
<dbReference type="GO" id="GO:0051262">
    <property type="term" value="P:protein tetramerization"/>
    <property type="evidence" value="ECO:0000314"/>
    <property type="project" value="UniProtKB"/>
</dbReference>
<dbReference type="GO" id="GO:0038026">
    <property type="term" value="P:reelin-mediated signaling pathway"/>
    <property type="evidence" value="ECO:0007669"/>
    <property type="project" value="Ensembl"/>
</dbReference>
<dbReference type="GO" id="GO:0003016">
    <property type="term" value="P:respiratory system process"/>
    <property type="evidence" value="ECO:0007669"/>
    <property type="project" value="Ensembl"/>
</dbReference>
<dbReference type="GO" id="GO:0014823">
    <property type="term" value="P:response to activity"/>
    <property type="evidence" value="ECO:0007669"/>
    <property type="project" value="Ensembl"/>
</dbReference>
<dbReference type="GO" id="GO:0097305">
    <property type="term" value="P:response to alcohol"/>
    <property type="evidence" value="ECO:0007669"/>
    <property type="project" value="Ensembl"/>
</dbReference>
<dbReference type="GO" id="GO:0051384">
    <property type="term" value="P:response to glucocorticoid"/>
    <property type="evidence" value="ECO:0007669"/>
    <property type="project" value="Ensembl"/>
</dbReference>
<dbReference type="GO" id="GO:0009410">
    <property type="term" value="P:response to xenobiotic stimulus"/>
    <property type="evidence" value="ECO:0007669"/>
    <property type="project" value="Ensembl"/>
</dbReference>
<dbReference type="GO" id="GO:0098528">
    <property type="term" value="P:skeletal muscle fiber differentiation"/>
    <property type="evidence" value="ECO:0007669"/>
    <property type="project" value="Ensembl"/>
</dbReference>
<dbReference type="GO" id="GO:0043403">
    <property type="term" value="P:skeletal muscle tissue regeneration"/>
    <property type="evidence" value="ECO:0007669"/>
    <property type="project" value="Ensembl"/>
</dbReference>
<dbReference type="InterPro" id="IPR055105">
    <property type="entry name" value="FKRP_N"/>
</dbReference>
<dbReference type="InterPro" id="IPR007074">
    <property type="entry name" value="LicD/FKTN/FKRP_NTP_transf"/>
</dbReference>
<dbReference type="InterPro" id="IPR052613">
    <property type="entry name" value="LicD_transferase"/>
</dbReference>
<dbReference type="PANTHER" id="PTHR13627">
    <property type="entry name" value="FUKUTIN RELATED PROTEIN"/>
    <property type="match status" value="1"/>
</dbReference>
<dbReference type="PANTHER" id="PTHR13627:SF31">
    <property type="entry name" value="RIBITOL 5-PHOSPHATE TRANSFERASE FKRP"/>
    <property type="match status" value="1"/>
</dbReference>
<dbReference type="Pfam" id="PF22921">
    <property type="entry name" value="FKRP_N"/>
    <property type="match status" value="1"/>
</dbReference>
<dbReference type="Pfam" id="PF04991">
    <property type="entry name" value="LicD"/>
    <property type="match status" value="1"/>
</dbReference>
<proteinExistence type="evidence at protein level"/>
<feature type="chain" id="PRO_0000204723" description="Ribitol 5-phosphate transferase FKRP">
    <location>
        <begin position="1"/>
        <end position="495"/>
    </location>
</feature>
<feature type="topological domain" description="Cytoplasmic" evidence="2">
    <location>
        <begin position="1"/>
        <end position="6"/>
    </location>
</feature>
<feature type="transmembrane region" description="Helical" evidence="2">
    <location>
        <begin position="7"/>
        <end position="29"/>
    </location>
</feature>
<feature type="topological domain" description="Lumenal" evidence="2">
    <location>
        <begin position="30"/>
        <end position="495"/>
    </location>
</feature>
<feature type="region of interest" description="Zinc finger loop" evidence="23 29">
    <location>
        <begin position="289"/>
        <end position="318"/>
    </location>
</feature>
<feature type="binding site" evidence="23 29">
    <location>
        <position position="289"/>
    </location>
    <ligand>
        <name>Zn(2+)</name>
        <dbReference type="ChEBI" id="CHEBI:29105"/>
    </ligand>
</feature>
<feature type="binding site" evidence="23 29">
    <location>
        <position position="296"/>
    </location>
    <ligand>
        <name>Zn(2+)</name>
        <dbReference type="ChEBI" id="CHEBI:29105"/>
    </ligand>
</feature>
<feature type="binding site" evidence="23 29">
    <location>
        <position position="317"/>
    </location>
    <ligand>
        <name>Zn(2+)</name>
        <dbReference type="ChEBI" id="CHEBI:29105"/>
    </ligand>
</feature>
<feature type="binding site" evidence="23 29">
    <location>
        <position position="318"/>
    </location>
    <ligand>
        <name>Zn(2+)</name>
        <dbReference type="ChEBI" id="CHEBI:29105"/>
    </ligand>
</feature>
<feature type="binding site" evidence="23 29 32">
    <location>
        <position position="345"/>
    </location>
    <ligand>
        <name>CDP-L-ribitol</name>
        <dbReference type="ChEBI" id="CHEBI:57608"/>
    </ligand>
</feature>
<feature type="binding site" evidence="23 29 32">
    <location>
        <position position="352"/>
    </location>
    <ligand>
        <name>CDP-L-ribitol</name>
        <dbReference type="ChEBI" id="CHEBI:57608"/>
    </ligand>
</feature>
<feature type="binding site" evidence="23 29 32">
    <location>
        <begin position="359"/>
        <end position="364"/>
    </location>
    <ligand>
        <name>CDP-L-ribitol</name>
        <dbReference type="ChEBI" id="CHEBI:57608"/>
    </ligand>
</feature>
<feature type="binding site" evidence="23 29">
    <location>
        <position position="360"/>
    </location>
    <ligand>
        <name>Mg(2+)</name>
        <dbReference type="ChEBI" id="CHEBI:18420"/>
    </ligand>
</feature>
<feature type="binding site" evidence="23 31">
    <location>
        <position position="362"/>
    </location>
    <ligand>
        <name>Mg(2+)</name>
        <dbReference type="ChEBI" id="CHEBI:18420"/>
    </ligand>
</feature>
<feature type="binding site" evidence="23 31">
    <location>
        <position position="364"/>
    </location>
    <ligand>
        <name>Mg(2+)</name>
        <dbReference type="ChEBI" id="CHEBI:18420"/>
    </ligand>
</feature>
<feature type="binding site" evidence="23 29 32">
    <location>
        <begin position="437"/>
        <end position="438"/>
    </location>
    <ligand>
        <name>CDP-L-ribitol</name>
        <dbReference type="ChEBI" id="CHEBI:57608"/>
    </ligand>
</feature>
<feature type="binding site" evidence="23 29 32">
    <location>
        <begin position="480"/>
        <end position="482"/>
    </location>
    <ligand>
        <name>CDP-L-ribitol</name>
        <dbReference type="ChEBI" id="CHEBI:57608"/>
    </ligand>
</feature>
<feature type="glycosylation site" description="N-linked (GlcNAc...) asparagine" evidence="15 23 29 30 31 32 33 34 35 36">
    <location>
        <position position="172"/>
    </location>
</feature>
<feature type="glycosylation site" description="N-linked (GlcNAc...) asparagine" evidence="15 23 29 30 31 32 33 34 35 36">
    <location>
        <position position="209"/>
    </location>
</feature>
<feature type="disulfide bond" description="Interchain" evidence="15">
    <location>
        <position position="6"/>
    </location>
</feature>
<feature type="disulfide bond" evidence="23 29 30 32 33 34 35 36">
    <location>
        <begin position="168"/>
        <end position="191"/>
    </location>
</feature>
<feature type="sequence variant" id="VAR_019272" description="In MDDGC5; dbSNP:rs28937905." evidence="7">
    <original>R</original>
    <variation>W</variation>
    <location>
        <position position="54"/>
    </location>
</feature>
<feature type="sequence variant" id="VAR_065055" description="In MDDGC5; dbSNP:rs104894683." evidence="8">
    <original>V</original>
    <variation>M</variation>
    <location>
        <position position="79"/>
    </location>
</feature>
<feature type="sequence variant" id="VAR_018280" description="In MDDGB5; uncertain significance; dbSNP:rs143793528." evidence="3">
    <original>A</original>
    <variation>G</variation>
    <location>
        <position position="114"/>
    </location>
</feature>
<feature type="sequence variant" id="VAR_065056" description="In MDDGC5; dbSNP:rs104894690." evidence="8">
    <original>R</original>
    <variation>W</variation>
    <location>
        <position position="134"/>
    </location>
</feature>
<feature type="sequence variant" id="VAR_018281" description="In MDDGC5." evidence="4">
    <location>
        <begin position="143"/>
        <end position="146"/>
    </location>
</feature>
<feature type="sequence variant" id="VAR_018282" description="In MDDGC5; dbSNP:rs148206382." evidence="4">
    <original>R</original>
    <variation>S</variation>
    <location>
        <position position="143"/>
    </location>
</feature>
<feature type="sequence variant" id="VAR_065057" description="In MDDGC5." evidence="8">
    <original>V</original>
    <variation>F</variation>
    <location>
        <position position="160"/>
    </location>
</feature>
<feature type="sequence variant" id="VAR_065058" description="In MDDGC5; dbSNP:rs543163491." evidence="8">
    <original>Y</original>
    <variation>C</variation>
    <location>
        <position position="182"/>
    </location>
</feature>
<feature type="sequence variant" id="VAR_018283" description="In MDDGB5." evidence="3">
    <original>P</original>
    <variation>T</variation>
    <location>
        <position position="217"/>
    </location>
</feature>
<feature type="sequence variant" id="VAR_018284" description="In MDDGB5; severe form; brain involvement; intellectual disability and cerebellar cysts on cranial MRI; affects tetramer assembly; decreases the ribitol 5-phosphate transferase activity of about 95%; dbSNP:rs28937902." evidence="5 23">
    <original>S</original>
    <variation>R</variation>
    <location>
        <position position="221"/>
    </location>
</feature>
<feature type="sequence variant" id="VAR_018285" description="In MDDGC5; reduced secretion to the medium; localizes mainly to the Golgi apparatus; affects tetramer assembly; decreases the ribitol-5-phosphate transferase activity of about 50%; dbSNP:rs28937900." evidence="4 6 8 13 14 23">
    <original>L</original>
    <variation>I</variation>
    <location>
        <position position="276"/>
    </location>
</feature>
<feature type="sequence variant" id="VAR_065059" description="In MDDGC5." evidence="8">
    <original>T</original>
    <variation>I</variation>
    <location>
        <position position="293"/>
    </location>
</feature>
<feature type="sequence variant" id="VAR_065060" description="In MDDGC5; dbSNP:rs104894691." evidence="8">
    <original>V</original>
    <variation>A</variation>
    <location>
        <position position="300"/>
    </location>
</feature>
<feature type="sequence variant" id="VAR_065061" description="In MDDGC5; uncertain significance; dbSNP:rs563033008." evidence="8">
    <original>V</original>
    <variation>M</variation>
    <location>
        <position position="300"/>
    </location>
</feature>
<feature type="sequence variant" id="VAR_022850" description="In MDDGC5 and MDDGA5; decrease in ribitol-5-phosphate transferase activity; dbSNP:rs104894692." evidence="6 10 18">
    <original>Y</original>
    <variation>N</variation>
    <location>
        <position position="307"/>
    </location>
</feature>
<feature type="sequence variant" id="VAR_018286" description="In MDDGB5; dbSNP:rs104894679." evidence="3 6">
    <original>Y</original>
    <variation>C</variation>
    <location>
        <position position="309"/>
    </location>
</feature>
<feature type="sequence variant" id="VAR_018287" description="In MDDGC5." evidence="4">
    <original>R</original>
    <variation>C</variation>
    <location>
        <position position="312"/>
    </location>
</feature>
<feature type="sequence variant" id="VAR_081096" description="In MDDGC5; dbSNP:rs398124395." evidence="22">
    <original>T</original>
    <variation>M</variation>
    <location>
        <position position="314"/>
    </location>
</feature>
<feature type="sequence variant" id="VAR_018288" description="In MDDGB5; severe form; brain involvement; intellectual disability and cerebellar cysts on cranial MRI." evidence="5">
    <original>P</original>
    <variation>T</variation>
    <location>
        <position position="315"/>
    </location>
</feature>
<feature type="sequence variant" id="VAR_018289" description="In MDDGB5 and MDDGC5; dbSNP:rs752582904." evidence="3 4">
    <original>P</original>
    <variation>R</variation>
    <location>
        <position position="316"/>
    </location>
</feature>
<feature type="sequence variant" id="VAR_022851" description="In MDDGC5; dbSNP:rs28937901." evidence="6">
    <original>P</original>
    <variation>S</variation>
    <location>
        <position position="316"/>
    </location>
</feature>
<feature type="sequence variant" id="VAR_022852" description="In MDDGA5; severe Walker-Warburg syndrome; dbSNP:rs104894684." evidence="10">
    <original>C</original>
    <variation>Y</variation>
    <location>
        <position position="318"/>
    </location>
</feature>
<feature type="sequence variant" id="VAR_018290" description="In MDDGB5." evidence="3">
    <original>Y</original>
    <variation>S</variation>
    <location>
        <position position="328"/>
    </location>
</feature>
<feature type="sequence variant" id="VAR_018292" description="In MDDGB5." evidence="3 6">
    <original>R</original>
    <variation>H</variation>
    <location>
        <position position="339"/>
    </location>
</feature>
<feature type="sequence variant" id="VAR_018291" description="In MDDGC5; dbSNP:rs1450841129." evidence="4">
    <original>R</original>
    <variation>L</variation>
    <location>
        <position position="339"/>
    </location>
</feature>
<feature type="sequence variant" id="VAR_065062" description="In MDDGC5; uncertain significance; dbSNP:rs143031195." evidence="8">
    <original>P</original>
    <variation>L</variation>
    <location>
        <position position="358"/>
    </location>
</feature>
<feature type="sequence variant" id="VAR_022853" description="In MDDGC5; dbSNP:rs770195088." evidence="6">
    <original>D</original>
    <variation>N</variation>
    <location>
        <position position="360"/>
    </location>
</feature>
<feature type="sequence variant" id="VAR_018293" description="In MDDGB5; dbSNP:rs1555739117." evidence="3">
    <original>D</original>
    <variation>N</variation>
    <location>
        <position position="401"/>
    </location>
</feature>
<feature type="sequence variant" id="VAR_022854" description="In MDDGB5; severe form; brain involvement; intellectual disability and cerebellar cysts on cranial MRI; dbSNP:rs28937904." evidence="9">
    <original>V</original>
    <variation>L</variation>
    <location>
        <position position="405"/>
    </location>
</feature>
<feature type="sequence variant" id="VAR_018294" description="In MDDGB5; strongly reduced secretion to the medium; localizes mainly to the ER compartment; dbSNP:rs104894681." evidence="3 6 13 14">
    <original>P</original>
    <variation>L</variation>
    <location>
        <position position="448"/>
    </location>
</feature>
<feature type="sequence variant" id="VAR_022855" description="In MDDGB5; severe form; brain involvement; intellectual disability and cerebellar cysts on cranial MRI; dbSNP:rs28937903." evidence="9">
    <original>A</original>
    <variation>D</variation>
    <location>
        <position position="455"/>
    </location>
</feature>
<feature type="sequence variant" id="VAR_022856" description="In MDDGC5; dbSNP:rs768606230." evidence="6">
    <original>P</original>
    <variation>S</variation>
    <location>
        <position position="462"/>
    </location>
</feature>
<feature type="sequence variant" id="VAR_065063" description="In MDDGB5; dbSNP:rs121908110." evidence="12">
    <original>N</original>
    <variation>D</variation>
    <location>
        <position position="463"/>
    </location>
</feature>
<feature type="sequence variant" id="VAR_018295" description="In MDDGB5; dbSNP:rs1057520772." evidence="3">
    <original>Y</original>
    <variation>S</variation>
    <location>
        <position position="465"/>
    </location>
</feature>
<feature type="mutagenesis site" description="Affects the tetramer assembly. Decreases the ribitol-5-phosphate transferase activity of about 80%." evidence="23">
    <original>Y</original>
    <variation>F</variation>
    <location>
        <position position="88"/>
    </location>
</feature>
<feature type="mutagenesis site" description="Does not affect protein expression. Loss of ribitol-5-phosphate transferase activity." evidence="23">
    <original>D</original>
    <variation>A</variation>
    <location>
        <position position="360"/>
    </location>
</feature>
<feature type="mutagenesis site" description="Decrease in ribitol-5-phosphate transferase activity. Does not affect protein expression. Loss of ribitol-5-phosphate transferase activity." evidence="18 23">
    <original>D</original>
    <variation>A</variation>
    <location>
        <position position="362"/>
    </location>
</feature>
<feature type="mutagenesis site" description="Does not affect protein expression. Loss of ribitol-5-phosphate transferase activity." evidence="23">
    <original>D</original>
    <variation>A</variation>
    <location>
        <position position="364"/>
    </location>
</feature>
<feature type="mutagenesis site" description="Does not affect protein expression. Loss of ribitol-5-phosphate transferase activity." evidence="23">
    <original>D</original>
    <variation>A</variation>
    <location>
        <position position="416"/>
    </location>
</feature>
<feature type="strand" evidence="37">
    <location>
        <begin position="49"/>
        <end position="53"/>
    </location>
</feature>
<feature type="helix" evidence="37">
    <location>
        <begin position="63"/>
        <end position="73"/>
    </location>
</feature>
<feature type="strand" evidence="37">
    <location>
        <begin position="79"/>
        <end position="85"/>
    </location>
</feature>
<feature type="strand" evidence="37">
    <location>
        <begin position="99"/>
        <end position="103"/>
    </location>
</feature>
<feature type="helix" evidence="37">
    <location>
        <begin position="112"/>
        <end position="115"/>
    </location>
</feature>
<feature type="helix" evidence="37">
    <location>
        <begin position="117"/>
        <end position="120"/>
    </location>
</feature>
<feature type="strand" evidence="37">
    <location>
        <begin position="123"/>
        <end position="128"/>
    </location>
</feature>
<feature type="helix" evidence="37">
    <location>
        <begin position="140"/>
        <end position="150"/>
    </location>
</feature>
<feature type="strand" evidence="37">
    <location>
        <begin position="154"/>
        <end position="160"/>
    </location>
</feature>
<feature type="strand" evidence="37">
    <location>
        <begin position="162"/>
        <end position="165"/>
    </location>
</feature>
<feature type="strand" evidence="37">
    <location>
        <begin position="167"/>
        <end position="174"/>
    </location>
</feature>
<feature type="turn" evidence="37">
    <location>
        <begin position="175"/>
        <end position="178"/>
    </location>
</feature>
<feature type="strand" evidence="37">
    <location>
        <begin position="179"/>
        <end position="184"/>
    </location>
</feature>
<feature type="turn" evidence="37">
    <location>
        <begin position="186"/>
        <end position="189"/>
    </location>
</feature>
<feature type="strand" evidence="37">
    <location>
        <begin position="190"/>
        <end position="203"/>
    </location>
</feature>
<feature type="helix" evidence="37">
    <location>
        <begin position="204"/>
        <end position="207"/>
    </location>
</feature>
<feature type="strand" evidence="37">
    <location>
        <begin position="210"/>
        <end position="212"/>
    </location>
</feature>
<feature type="helix" evidence="37">
    <location>
        <begin position="218"/>
        <end position="228"/>
    </location>
</feature>
<feature type="strand" evidence="37">
    <location>
        <begin position="233"/>
        <end position="235"/>
    </location>
</feature>
<feature type="strand" evidence="37">
    <location>
        <begin position="240"/>
        <end position="242"/>
    </location>
</feature>
<feature type="helix" evidence="37">
    <location>
        <begin position="251"/>
        <end position="272"/>
    </location>
</feature>
<feature type="strand" evidence="37">
    <location>
        <begin position="276"/>
        <end position="279"/>
    </location>
</feature>
<feature type="strand" evidence="37">
    <location>
        <begin position="282"/>
        <end position="286"/>
    </location>
</feature>
<feature type="strand" evidence="38">
    <location>
        <begin position="301"/>
        <end position="303"/>
    </location>
</feature>
<feature type="helix" evidence="37">
    <location>
        <begin position="306"/>
        <end position="309"/>
    </location>
</feature>
<feature type="helix" evidence="37">
    <location>
        <begin position="316"/>
        <end position="336"/>
    </location>
</feature>
<feature type="strand" evidence="37">
    <location>
        <begin position="340"/>
        <end position="342"/>
    </location>
</feature>
<feature type="helix" evidence="37">
    <location>
        <begin position="344"/>
        <end position="353"/>
    </location>
</feature>
<feature type="strand" evidence="37">
    <location>
        <begin position="363"/>
        <end position="368"/>
    </location>
</feature>
<feature type="helix" evidence="37">
    <location>
        <begin position="369"/>
        <end position="374"/>
    </location>
</feature>
<feature type="helix" evidence="37">
    <location>
        <begin position="376"/>
        <end position="383"/>
    </location>
</feature>
<feature type="strand" evidence="37">
    <location>
        <begin position="393"/>
        <end position="396"/>
    </location>
</feature>
<feature type="strand" evidence="37">
    <location>
        <begin position="398"/>
        <end position="401"/>
    </location>
</feature>
<feature type="strand" evidence="37">
    <location>
        <begin position="403"/>
        <end position="410"/>
    </location>
</feature>
<feature type="strand" evidence="37">
    <location>
        <begin position="414"/>
        <end position="428"/>
    </location>
</feature>
<feature type="helix" evidence="37">
    <location>
        <begin position="443"/>
        <end position="446"/>
    </location>
</feature>
<feature type="strand" evidence="37">
    <location>
        <begin position="447"/>
        <end position="454"/>
    </location>
</feature>
<feature type="strand" evidence="37">
    <location>
        <begin position="457"/>
        <end position="464"/>
    </location>
</feature>
<feature type="helix" evidence="37">
    <location>
        <begin position="465"/>
        <end position="473"/>
    </location>
</feature>
<feature type="turn" evidence="37">
    <location>
        <begin position="475"/>
        <end position="479"/>
    </location>
</feature>
<feature type="helix" evidence="37">
    <location>
        <begin position="486"/>
        <end position="492"/>
    </location>
</feature>
<organism>
    <name type="scientific">Homo sapiens</name>
    <name type="common">Human</name>
    <dbReference type="NCBI Taxonomy" id="9606"/>
    <lineage>
        <taxon>Eukaryota</taxon>
        <taxon>Metazoa</taxon>
        <taxon>Chordata</taxon>
        <taxon>Craniata</taxon>
        <taxon>Vertebrata</taxon>
        <taxon>Euteleostomi</taxon>
        <taxon>Mammalia</taxon>
        <taxon>Eutheria</taxon>
        <taxon>Euarchontoglires</taxon>
        <taxon>Primates</taxon>
        <taxon>Haplorrhini</taxon>
        <taxon>Catarrhini</taxon>
        <taxon>Hominidae</taxon>
        <taxon>Homo</taxon>
    </lineage>
</organism>
<keyword id="KW-0002">3D-structure</keyword>
<keyword id="KW-0122">Cardiomyopathy</keyword>
<keyword id="KW-1003">Cell membrane</keyword>
<keyword id="KW-0912">Congenital muscular dystrophy</keyword>
<keyword id="KW-0963">Cytoplasm</keyword>
<keyword id="KW-0225">Disease variant</keyword>
<keyword id="KW-1015">Disulfide bond</keyword>
<keyword id="KW-1215">Dystroglycanopathy</keyword>
<keyword id="KW-0256">Endoplasmic reticulum</keyword>
<keyword id="KW-0325">Glycoprotein</keyword>
<keyword id="KW-0333">Golgi apparatus</keyword>
<keyword id="KW-0947">Limb-girdle muscular dystrophy</keyword>
<keyword id="KW-0451">Lissencephaly</keyword>
<keyword id="KW-0460">Magnesium</keyword>
<keyword id="KW-0472">Membrane</keyword>
<keyword id="KW-0479">Metal-binding</keyword>
<keyword id="KW-1267">Proteomics identification</keyword>
<keyword id="KW-1185">Reference proteome</keyword>
<keyword id="KW-0964">Secreted</keyword>
<keyword id="KW-0735">Signal-anchor</keyword>
<keyword id="KW-0808">Transferase</keyword>
<keyword id="KW-0812">Transmembrane</keyword>
<keyword id="KW-1133">Transmembrane helix</keyword>
<keyword id="KW-0862">Zinc</keyword>
<comment type="function">
    <text evidence="17 18 19 21 23">Catalyzes the transfer of a ribitol 5-phosphate from CDP-L-ribitol to the ribitol 5-phosphate previously attached by FKTN/fukutin to the phosphorylated O-mannosyl trisaccharide (N-acetylgalactosamine-beta-3-N-acetylglucosamine-beta-4-(phosphate-6-)mannose), a carbohydrate structure present in alpha-dystroglycan (DAG1) (PubMed:26923585, PubMed:27194101, PubMed:29477842, PubMed:31949166). This constitutes the second step in the formation of the ribose 5-phosphate tandem repeat which links the phosphorylated O-mannosyl trisaccharide to the ligand binding moiety composed of repeats of 3-xylosyl-alpha-1,3-glucuronic acid-beta-1 (PubMed:25279699, PubMed:26923585, PubMed:27194101, PubMed:29477842, PubMed:31949166).</text>
</comment>
<comment type="catalytic activity">
    <reaction evidence="18 21 23">
        <text>3-O-[Rib-ol-P-3-beta-D-GalNAc-(1-&gt;3)-beta-D-GlcNAc-(1-&gt;4)-(O-6-P-alpha-D-Man)]-Thr-[protein] + CDP-L-ribitol = 3-O-[Rib-ol-P-Rib-ol-P-3-beta-D-GalNAc-(1-&gt;3)-beta-D-GlcNAc-(1-&gt;4)-(O-6-P-alpha-D-Man)]-Thr-[protein] + CMP + H(+)</text>
        <dbReference type="Rhea" id="RHEA:39867"/>
        <dbReference type="Rhea" id="RHEA-COMP:15021"/>
        <dbReference type="Rhea" id="RHEA-COMP:17480"/>
        <dbReference type="ChEBI" id="CHEBI:15378"/>
        <dbReference type="ChEBI" id="CHEBI:57608"/>
        <dbReference type="ChEBI" id="CHEBI:60377"/>
        <dbReference type="ChEBI" id="CHEBI:142403"/>
        <dbReference type="ChEBI" id="CHEBI:177331"/>
    </reaction>
    <physiologicalReaction direction="left-to-right" evidence="18">
        <dbReference type="Rhea" id="RHEA:39868"/>
    </physiologicalReaction>
</comment>
<comment type="cofactor">
    <cofactor evidence="23">
        <name>Mg(2+)</name>
        <dbReference type="ChEBI" id="CHEBI:18420"/>
    </cofactor>
</comment>
<comment type="pathway">
    <text evidence="17 18 19 23">Protein modification; protein glycosylation.</text>
</comment>
<comment type="subunit">
    <text evidence="1 15 17 21 23">Homodimer; disulfide-linked (PubMed:21886772). Tetramer (PubMed:31949166). Forms a complex composed of FKRP, FKTN/fukutin, and RXYLT1/TMEM5 (PubMed:29477842). Also exists as large multimeric protein complexes (PubMed:25279699). May interact with the dystrophin-glycoprotein complex (DGC) (By similarity).</text>
</comment>
<comment type="interaction">
    <interactant intactId="EBI-21505709">
        <id>Q9H9S5</id>
    </interactant>
    <interactant intactId="EBI-21505709">
        <id>Q9H9S5</id>
        <label>FKRP</label>
    </interactant>
    <organismsDiffer>false</organismsDiffer>
    <experiments>3</experiments>
</comment>
<comment type="subcellular location">
    <subcellularLocation>
        <location evidence="13 15 17 21 27">Golgi apparatus membrane</location>
        <topology evidence="26">Single-pass type II membrane protein</topology>
    </subcellularLocation>
    <subcellularLocation>
        <location evidence="14">Secreted</location>
    </subcellularLocation>
    <subcellularLocation>
        <location evidence="1">Cell membrane</location>
        <location evidence="1">Sarcolemma</location>
    </subcellularLocation>
    <subcellularLocation>
        <location evidence="11">Rough endoplasmic reticulum</location>
    </subcellularLocation>
    <subcellularLocation>
        <location evidence="1">Cytoplasm</location>
    </subcellularLocation>
    <text evidence="1 11 13 14 15">According to some studies the N-terminal hydrophobic domain is cleaved after translocation to the Golgi apparatus and the protein is secreted (PubMed:19900540). Localization at the cell membrane may require the presence of dystroglycan (By similarity). At the Golgi apparatus localizes to the middle-to-trans-cisternae, as assessed by MG160 colocalization. Detected in rough endoplasmic reticulum in myocytes (PubMed:17554798, PubMed:21886772). In general, mutants associated with severe clinical phenotypes are retained within the endoplasmic reticulum (PubMed:15213246).</text>
</comment>
<comment type="tissue specificity">
    <text evidence="3 20">Expressed in the retina (at protein level) (PubMed:29416295). Expressed predominantly in skeletal muscle, placenta, and heart and relatively weakly in brain, lung, liver, kidney, and pancreas (PubMed:11592034).</text>
</comment>
<comment type="PTM">
    <text evidence="14 15">N-glycosylated.</text>
</comment>
<comment type="disease" evidence="10">
    <disease id="DI-02953">
        <name>Muscular dystrophy-dystroglycanopathy congenital with brain and eye anomalies A5</name>
        <acronym>MDDGA5</acronym>
        <description>An autosomal recessive disorder characterized by congenital muscular dystrophy associated with cobblestone lissencephaly and other brain anomalies, eye malformations, profound intellectual disability, and death usually in the first years of life. Included diseases are the more severe Walker-Warburg syndrome and the slightly less severe muscle-eye-brain disease.</description>
        <dbReference type="MIM" id="613153"/>
    </disease>
    <text>The disease is caused by variants affecting the gene represented in this entry.</text>
</comment>
<comment type="disease" evidence="3 5 6 9 12 23">
    <disease id="DI-01409">
        <name>Muscular dystrophy-dystroglycanopathy congenital with or without impaired intellectual development B5</name>
        <acronym>MDDGB5</acronym>
        <description>A congenital muscular dystrophy characterized by a severe phenotype with inability to walk, muscle hypertrophy, marked elevation of serum creatine kinase, secondary deficiency of laminin alpha2, and a marked reduction in alpha-dystroglycan expression. Only a subset of affected individuals have brain involvements.</description>
        <dbReference type="MIM" id="606612"/>
    </disease>
    <text>The disease is caused by variants affecting the gene represented in this entry.</text>
</comment>
<comment type="disease" evidence="4 6 7 8 16 22 23">
    <disease id="DI-00666">
        <name>Muscular dystrophy-dystroglycanopathy limb-girdle C5</name>
        <acronym>MDDGC5</acronym>
        <description>An autosomal recessive degenerative myopathy with age of onset ranging from childhood to adult life, and variable severity. Clinical features include proximal muscle weakness, waddling gait, calf hypertrophy, cardiomyopathy and respiratory insufficiency. A reduction of alpha-dystroglycan and laminin alpha-2 expression can be observed on skeletal muscle biopsy from MDDGC5 patients.</description>
        <dbReference type="MIM" id="607155"/>
    </disease>
    <text>The disease is caused by variants affecting the gene represented in this entry.</text>
</comment>
<comment type="similarity">
    <text evidence="26">Belongs to the LicD transferase family.</text>
</comment>
<accession>Q9H9S5</accession>
<accession>A8K5G7</accession>
<sequence length="495" mass="54568">MRLTRCQAALAAAITLNLLVLFYVSWLQHQPRNSRARGPRRASAAGPRVTVLVREFEAFDNAVPELVDSFLQQDPAQPVVVAADTLPYPPLALPRIPNVRLALLQPALDRPAAASRPETYVATEFVALVPDGARAEAPGLLERMVEALRAGSARLVAAPVATANPARCLALNVSLREWTARYGAAPAAPRCDALDGDAVVLLRARDLFNLSAPLARPVGTSLFLQTALRGWAVQLLDLTFAAARQPPLATAHARWKAEREGRARRAALLRALGIRLVSWEGGRLEWFGCNKETTRCFGTVVGDTPAYLYEERWTPPCCLRALRETARYVVGVLEAAGVRYWLEGGSLLGAARHGDIIPWDYDVDLGIYLEDVGNCEQLRGAEAGSVVDERGFVWEKAVEGDFFRVQYSESNHLHVDLWPFYPRNGVMTKDTWLDHRQDVEFPEHFLQPLVPLPFAGFVAQAPNNYRRFLELKFGPGVIENPQYPNPALLSLTGSG</sequence>
<reference key="1">
    <citation type="journal article" date="2001" name="Am. J. Hum. Genet.">
        <title>Mutations in the fukutin-related protein gene (FKRP) cause a form of congenital muscular dystrophy with secondary laminin alpha2 deficiency and abnormal glycosylation of alpha-dystroglycan.</title>
        <authorList>
            <person name="Brockington M."/>
            <person name="Blake D.J."/>
            <person name="Prandini P."/>
            <person name="Brown S.C."/>
            <person name="Torelli S."/>
            <person name="Benson M.A."/>
            <person name="Ponting C.P."/>
            <person name="Estournet B."/>
            <person name="Romero N.B."/>
            <person name="Mercuri E."/>
            <person name="Voit T."/>
            <person name="Sewry C.A."/>
            <person name="Guicheney P."/>
            <person name="Muntoni F."/>
        </authorList>
    </citation>
    <scope>NUCLEOTIDE SEQUENCE [MRNA]</scope>
    <scope>TISSUE SPECIFICITY</scope>
    <scope>VARIANTS MDDGB5 GLY-114; THR-217; CYS-309; ARG-316; SER-328; HIS-339; ASN-401; LEU-448 AND SER-465</scope>
    <source>
        <tissue>Brain</tissue>
    </source>
</reference>
<reference key="2">
    <citation type="journal article" date="2004" name="Nat. Genet.">
        <title>Complete sequencing and characterization of 21,243 full-length human cDNAs.</title>
        <authorList>
            <person name="Ota T."/>
            <person name="Suzuki Y."/>
            <person name="Nishikawa T."/>
            <person name="Otsuki T."/>
            <person name="Sugiyama T."/>
            <person name="Irie R."/>
            <person name="Wakamatsu A."/>
            <person name="Hayashi K."/>
            <person name="Sato H."/>
            <person name="Nagai K."/>
            <person name="Kimura K."/>
            <person name="Makita H."/>
            <person name="Sekine M."/>
            <person name="Obayashi M."/>
            <person name="Nishi T."/>
            <person name="Shibahara T."/>
            <person name="Tanaka T."/>
            <person name="Ishii S."/>
            <person name="Yamamoto J."/>
            <person name="Saito K."/>
            <person name="Kawai Y."/>
            <person name="Isono Y."/>
            <person name="Nakamura Y."/>
            <person name="Nagahari K."/>
            <person name="Murakami K."/>
            <person name="Yasuda T."/>
            <person name="Iwayanagi T."/>
            <person name="Wagatsuma M."/>
            <person name="Shiratori A."/>
            <person name="Sudo H."/>
            <person name="Hosoiri T."/>
            <person name="Kaku Y."/>
            <person name="Kodaira H."/>
            <person name="Kondo H."/>
            <person name="Sugawara M."/>
            <person name="Takahashi M."/>
            <person name="Kanda K."/>
            <person name="Yokoi T."/>
            <person name="Furuya T."/>
            <person name="Kikkawa E."/>
            <person name="Omura Y."/>
            <person name="Abe K."/>
            <person name="Kamihara K."/>
            <person name="Katsuta N."/>
            <person name="Sato K."/>
            <person name="Tanikawa M."/>
            <person name="Yamazaki M."/>
            <person name="Ninomiya K."/>
            <person name="Ishibashi T."/>
            <person name="Yamashita H."/>
            <person name="Murakawa K."/>
            <person name="Fujimori K."/>
            <person name="Tanai H."/>
            <person name="Kimata M."/>
            <person name="Watanabe M."/>
            <person name="Hiraoka S."/>
            <person name="Chiba Y."/>
            <person name="Ishida S."/>
            <person name="Ono Y."/>
            <person name="Takiguchi S."/>
            <person name="Watanabe S."/>
            <person name="Yosida M."/>
            <person name="Hotuta T."/>
            <person name="Kusano J."/>
            <person name="Kanehori K."/>
            <person name="Takahashi-Fujii A."/>
            <person name="Hara H."/>
            <person name="Tanase T.-O."/>
            <person name="Nomura Y."/>
            <person name="Togiya S."/>
            <person name="Komai F."/>
            <person name="Hara R."/>
            <person name="Takeuchi K."/>
            <person name="Arita M."/>
            <person name="Imose N."/>
            <person name="Musashino K."/>
            <person name="Yuuki H."/>
            <person name="Oshima A."/>
            <person name="Sasaki N."/>
            <person name="Aotsuka S."/>
            <person name="Yoshikawa Y."/>
            <person name="Matsunawa H."/>
            <person name="Ichihara T."/>
            <person name="Shiohata N."/>
            <person name="Sano S."/>
            <person name="Moriya S."/>
            <person name="Momiyama H."/>
            <person name="Satoh N."/>
            <person name="Takami S."/>
            <person name="Terashima Y."/>
            <person name="Suzuki O."/>
            <person name="Nakagawa S."/>
            <person name="Senoh A."/>
            <person name="Mizoguchi H."/>
            <person name="Goto Y."/>
            <person name="Shimizu F."/>
            <person name="Wakebe H."/>
            <person name="Hishigaki H."/>
            <person name="Watanabe T."/>
            <person name="Sugiyama A."/>
            <person name="Takemoto M."/>
            <person name="Kawakami B."/>
            <person name="Yamazaki M."/>
            <person name="Watanabe K."/>
            <person name="Kumagai A."/>
            <person name="Itakura S."/>
            <person name="Fukuzumi Y."/>
            <person name="Fujimori Y."/>
            <person name="Komiyama M."/>
            <person name="Tashiro H."/>
            <person name="Tanigami A."/>
            <person name="Fujiwara T."/>
            <person name="Ono T."/>
            <person name="Yamada K."/>
            <person name="Fujii Y."/>
            <person name="Ozaki K."/>
            <person name="Hirao M."/>
            <person name="Ohmori Y."/>
            <person name="Kawabata A."/>
            <person name="Hikiji T."/>
            <person name="Kobatake N."/>
            <person name="Inagaki H."/>
            <person name="Ikema Y."/>
            <person name="Okamoto S."/>
            <person name="Okitani R."/>
            <person name="Kawakami T."/>
            <person name="Noguchi S."/>
            <person name="Itoh T."/>
            <person name="Shigeta K."/>
            <person name="Senba T."/>
            <person name="Matsumura K."/>
            <person name="Nakajima Y."/>
            <person name="Mizuno T."/>
            <person name="Morinaga M."/>
            <person name="Sasaki M."/>
            <person name="Togashi T."/>
            <person name="Oyama M."/>
            <person name="Hata H."/>
            <person name="Watanabe M."/>
            <person name="Komatsu T."/>
            <person name="Mizushima-Sugano J."/>
            <person name="Satoh T."/>
            <person name="Shirai Y."/>
            <person name="Takahashi Y."/>
            <person name="Nakagawa K."/>
            <person name="Okumura K."/>
            <person name="Nagase T."/>
            <person name="Nomura N."/>
            <person name="Kikuchi H."/>
            <person name="Masuho Y."/>
            <person name="Yamashita R."/>
            <person name="Nakai K."/>
            <person name="Yada T."/>
            <person name="Nakamura Y."/>
            <person name="Ohara O."/>
            <person name="Isogai T."/>
            <person name="Sugano S."/>
        </authorList>
    </citation>
    <scope>NUCLEOTIDE SEQUENCE [LARGE SCALE MRNA]</scope>
    <source>
        <tissue>Brain</tissue>
    </source>
</reference>
<reference key="3">
    <citation type="journal article" date="2004" name="Nature">
        <title>The DNA sequence and biology of human chromosome 19.</title>
        <authorList>
            <person name="Grimwood J."/>
            <person name="Gordon L.A."/>
            <person name="Olsen A.S."/>
            <person name="Terry A."/>
            <person name="Schmutz J."/>
            <person name="Lamerdin J.E."/>
            <person name="Hellsten U."/>
            <person name="Goodstein D."/>
            <person name="Couronne O."/>
            <person name="Tran-Gyamfi M."/>
            <person name="Aerts A."/>
            <person name="Altherr M."/>
            <person name="Ashworth L."/>
            <person name="Bajorek E."/>
            <person name="Black S."/>
            <person name="Branscomb E."/>
            <person name="Caenepeel S."/>
            <person name="Carrano A.V."/>
            <person name="Caoile C."/>
            <person name="Chan Y.M."/>
            <person name="Christensen M."/>
            <person name="Cleland C.A."/>
            <person name="Copeland A."/>
            <person name="Dalin E."/>
            <person name="Dehal P."/>
            <person name="Denys M."/>
            <person name="Detter J.C."/>
            <person name="Escobar J."/>
            <person name="Flowers D."/>
            <person name="Fotopulos D."/>
            <person name="Garcia C."/>
            <person name="Georgescu A.M."/>
            <person name="Glavina T."/>
            <person name="Gomez M."/>
            <person name="Gonzales E."/>
            <person name="Groza M."/>
            <person name="Hammon N."/>
            <person name="Hawkins T."/>
            <person name="Haydu L."/>
            <person name="Ho I."/>
            <person name="Huang W."/>
            <person name="Israni S."/>
            <person name="Jett J."/>
            <person name="Kadner K."/>
            <person name="Kimball H."/>
            <person name="Kobayashi A."/>
            <person name="Larionov V."/>
            <person name="Leem S.-H."/>
            <person name="Lopez F."/>
            <person name="Lou Y."/>
            <person name="Lowry S."/>
            <person name="Malfatti S."/>
            <person name="Martinez D."/>
            <person name="McCready P.M."/>
            <person name="Medina C."/>
            <person name="Morgan J."/>
            <person name="Nelson K."/>
            <person name="Nolan M."/>
            <person name="Ovcharenko I."/>
            <person name="Pitluck S."/>
            <person name="Pollard M."/>
            <person name="Popkie A.P."/>
            <person name="Predki P."/>
            <person name="Quan G."/>
            <person name="Ramirez L."/>
            <person name="Rash S."/>
            <person name="Retterer J."/>
            <person name="Rodriguez A."/>
            <person name="Rogers S."/>
            <person name="Salamov A."/>
            <person name="Salazar A."/>
            <person name="She X."/>
            <person name="Smith D."/>
            <person name="Slezak T."/>
            <person name="Solovyev V."/>
            <person name="Thayer N."/>
            <person name="Tice H."/>
            <person name="Tsai M."/>
            <person name="Ustaszewska A."/>
            <person name="Vo N."/>
            <person name="Wagner M."/>
            <person name="Wheeler J."/>
            <person name="Wu K."/>
            <person name="Xie G."/>
            <person name="Yang J."/>
            <person name="Dubchak I."/>
            <person name="Furey T.S."/>
            <person name="DeJong P."/>
            <person name="Dickson M."/>
            <person name="Gordon D."/>
            <person name="Eichler E.E."/>
            <person name="Pennacchio L.A."/>
            <person name="Richardson P."/>
            <person name="Stubbs L."/>
            <person name="Rokhsar D.S."/>
            <person name="Myers R.M."/>
            <person name="Rubin E.M."/>
            <person name="Lucas S.M."/>
        </authorList>
    </citation>
    <scope>NUCLEOTIDE SEQUENCE [LARGE SCALE GENOMIC DNA]</scope>
</reference>
<reference key="4">
    <citation type="submission" date="2005-07" db="EMBL/GenBank/DDBJ databases">
        <authorList>
            <person name="Mural R.J."/>
            <person name="Istrail S."/>
            <person name="Sutton G.G."/>
            <person name="Florea L."/>
            <person name="Halpern A.L."/>
            <person name="Mobarry C.M."/>
            <person name="Lippert R."/>
            <person name="Walenz B."/>
            <person name="Shatkay H."/>
            <person name="Dew I."/>
            <person name="Miller J.R."/>
            <person name="Flanigan M.J."/>
            <person name="Edwards N.J."/>
            <person name="Bolanos R."/>
            <person name="Fasulo D."/>
            <person name="Halldorsson B.V."/>
            <person name="Hannenhalli S."/>
            <person name="Turner R."/>
            <person name="Yooseph S."/>
            <person name="Lu F."/>
            <person name="Nusskern D.R."/>
            <person name="Shue B.C."/>
            <person name="Zheng X.H."/>
            <person name="Zhong F."/>
            <person name="Delcher A.L."/>
            <person name="Huson D.H."/>
            <person name="Kravitz S.A."/>
            <person name="Mouchard L."/>
            <person name="Reinert K."/>
            <person name="Remington K.A."/>
            <person name="Clark A.G."/>
            <person name="Waterman M.S."/>
            <person name="Eichler E.E."/>
            <person name="Adams M.D."/>
            <person name="Hunkapiller M.W."/>
            <person name="Myers E.W."/>
            <person name="Venter J.C."/>
        </authorList>
    </citation>
    <scope>NUCLEOTIDE SEQUENCE [LARGE SCALE GENOMIC DNA]</scope>
</reference>
<reference key="5">
    <citation type="journal article" date="2004" name="Genome Res.">
        <title>The status, quality, and expansion of the NIH full-length cDNA project: the Mammalian Gene Collection (MGC).</title>
        <authorList>
            <consortium name="The MGC Project Team"/>
        </authorList>
    </citation>
    <scope>NUCLEOTIDE SEQUENCE [LARGE SCALE MRNA]</scope>
    <source>
        <tissue>Brain</tissue>
    </source>
</reference>
<reference key="6">
    <citation type="journal article" date="2004" name="J. Biochem.">
        <title>Subcellular localization of fukutin and fukutin-related protein in muscle cells.</title>
        <authorList>
            <person name="Matsumoto H."/>
            <person name="Noguchi S."/>
            <person name="Sugie K."/>
            <person name="Ogawa M."/>
            <person name="Murayama K."/>
            <person name="Hayashi Y.K."/>
            <person name="Nishino I."/>
        </authorList>
    </citation>
    <scope>SUBCELLULAR LOCATION</scope>
</reference>
<reference key="7">
    <citation type="journal article" date="2007" name="Muscle Nerve">
        <title>Fukutin-related protein localizes to the Golgi apparatus and mutations lead to mislocalization in muscle in vivo.</title>
        <authorList>
            <person name="Keramaris-Vrantsis E."/>
            <person name="Lu P.J."/>
            <person name="Doran T."/>
            <person name="Zillmer A."/>
            <person name="Ashar J."/>
            <person name="Esapa C.T."/>
            <person name="Benson M.A."/>
            <person name="Blake D.J."/>
            <person name="Rosenfeld J."/>
            <person name="Lu Q.L."/>
        </authorList>
    </citation>
    <scope>SUBCELLULAR LOCATION</scope>
    <scope>CHARACTERIZATION OF VARIANTS ILE-276 AND LEU-448</scope>
</reference>
<reference key="8">
    <citation type="journal article" date="2010" name="Biochim. Biophys. Acta">
        <title>Mutations alter secretion of fukutin-related protein.</title>
        <authorList>
            <person name="Lu P.J."/>
            <person name="Zillmer A."/>
            <person name="Wu X."/>
            <person name="Lochmuller H."/>
            <person name="Vachris J."/>
            <person name="Blake D."/>
            <person name="Chan Y.M."/>
            <person name="Lu Q.L."/>
        </authorList>
    </citation>
    <scope>SUBCELLULAR LOCATION</scope>
    <scope>GLYCOSYLATION</scope>
    <scope>CHARACTERIZATION OF VARIANTS ILE-276 AND LEU-448</scope>
</reference>
<reference key="9">
    <citation type="journal article" date="2011" name="PLoS ONE">
        <title>Fukutin-related protein resides in the Golgi cisternae of skeletal muscle fibres and forms disulfide-linked homodimers via an N-Terminal interaction.</title>
        <authorList>
            <person name="Alhamidi M."/>
            <person name="Kjeldsen Buvang E."/>
            <person name="Fagerheim T."/>
            <person name="Brox V."/>
            <person name="Lindal S."/>
            <person name="Van Ghelue M."/>
            <person name="Nilssen O."/>
        </authorList>
    </citation>
    <scope>SUBCELLULAR LOCATION</scope>
    <scope>GLYCOSYLATION AT ASN-172 AND ASN-209</scope>
    <scope>SUBUNIT</scope>
    <scope>DISULFIDE BOND</scope>
</reference>
<reference key="10">
    <citation type="journal article" date="2013" name="Neuromuscul. Disord.">
        <title>Limb-girdle muscular dystrophy type 2I is not rare in Taiwan.</title>
        <authorList>
            <person name="Liang W.C."/>
            <person name="Hayashi Y.K."/>
            <person name="Ogawa M."/>
            <person name="Wang C.H."/>
            <person name="Huang W.T."/>
            <person name="Nishino I."/>
            <person name="Jong Y.J."/>
        </authorList>
    </citation>
    <scope>INVOLVEMENT IN MDDGC5</scope>
</reference>
<reference key="11">
    <citation type="journal article" date="2014" name="Elife">
        <title>The glucuronyltransferase B4GAT1 is required for initiation of LARGE-mediated alpha-dystroglycan functional glycosylation.</title>
        <authorList>
            <person name="Willer T."/>
            <person name="Inamori K.I."/>
            <person name="Venzke D."/>
            <person name="Harvey C."/>
            <person name="Morgensen G."/>
            <person name="Hara Y."/>
            <person name="Beltran Valero de Bernabe D."/>
            <person name="Yu L."/>
            <person name="Wright K.M."/>
            <person name="Campbell K.P."/>
        </authorList>
    </citation>
    <scope>FUNCTION</scope>
    <scope>SUBCELLULAR LOCATION</scope>
    <scope>PATHWAY</scope>
</reference>
<reference key="12">
    <citation type="journal article" date="2016" name="Cell Rep.">
        <title>Identification of a Post-translational Modification with Ribitol-Phosphate and Its Defect in Muscular Dystrophy.</title>
        <authorList>
            <person name="Kanagawa M."/>
            <person name="Kobayashi K."/>
            <person name="Tajiri M."/>
            <person name="Manya H."/>
            <person name="Kuga A."/>
            <person name="Yamaguchi Y."/>
            <person name="Akasaka-Manya K."/>
            <person name="Furukawa J.I."/>
            <person name="Mizuno M."/>
            <person name="Kawakami H."/>
            <person name="Shinohara Y."/>
            <person name="Wada Y."/>
            <person name="Endo T."/>
            <person name="Toda T."/>
        </authorList>
    </citation>
    <scope>FUNCTION</scope>
    <scope>CATALYTIC ACTIVITY</scope>
    <scope>PATHWAY</scope>
    <scope>SUBCELLULAR LOCATION</scope>
    <scope>MUTAGENESIS OF ASP-362</scope>
    <scope>VARIANT ASN-307</scope>
</reference>
<reference key="13">
    <citation type="journal article" date="2016" name="Nat. Commun.">
        <title>ISPD produces CDP-ribitol used by FKTN and FKRP to transfer ribitol phosphate onto alpha-dystroglycan.</title>
        <authorList>
            <person name="Gerin I."/>
            <person name="Ury B."/>
            <person name="Breloy I."/>
            <person name="Bouchet-Seraphin C."/>
            <person name="Bolsee J."/>
            <person name="Halbout M."/>
            <person name="Graff J."/>
            <person name="Vertommen D."/>
            <person name="Muccioli G.G."/>
            <person name="Seta N."/>
            <person name="Cuisset J.M."/>
            <person name="Dabaj I."/>
            <person name="Quijano-Roy S."/>
            <person name="Grahn A."/>
            <person name="Van Schaftingen E."/>
            <person name="Bommer G.T."/>
        </authorList>
    </citation>
    <scope>FUNCTION</scope>
    <scope>PATHWAY</scope>
</reference>
<reference key="14">
    <citation type="journal article" date="2018" name="Biochem. Biophys. Res. Commun.">
        <title>Cell endogenous activities of fukutin and FKRP coexist with the ribitol xylosyltransferase, TMEM5.</title>
        <authorList>
            <person name="Nishihara R."/>
            <person name="Kobayashi K."/>
            <person name="Imae R."/>
            <person name="Tsumoto H."/>
            <person name="Manya H."/>
            <person name="Mizuno M."/>
            <person name="Kanagawa M."/>
            <person name="Endo T."/>
            <person name="Toda T."/>
        </authorList>
    </citation>
    <scope>FUNCTION</scope>
    <scope>IDENTIFICATION IN A COMPLEX WITH FKTN AND RXYLT1</scope>
    <scope>SUBCELLULAR LOCATION</scope>
    <scope>CATALYTIC ACTIVITY</scope>
</reference>
<reference key="15">
    <citation type="journal article" date="2018" name="Mol. Vis.">
        <title>Expression in retinal neurons of fukutin and FKRP, the protein products of two dystroglycanopathy-causative genes.</title>
        <authorList>
            <person name="Haro C."/>
            <person name="Uribe M.L."/>
            <person name="Quereda C."/>
            <person name="Cruces J."/>
            <person name="Martin-Nieto J."/>
        </authorList>
    </citation>
    <scope>TISSUE SPECIFICITY</scope>
</reference>
<reference evidence="29 30 31 32 33 34 35 36" key="16">
    <citation type="journal article" date="2020" name="Nat. Commun.">
        <title>Crystal structures of fukutin-related protein (FKRP), a ribitol-phosphate transferase related to muscular dystrophy.</title>
        <authorList>
            <person name="Kuwabara N."/>
            <person name="Imae R."/>
            <person name="Manya H."/>
            <person name="Tanaka T."/>
            <person name="Mizuno M."/>
            <person name="Tsumoto H."/>
            <person name="Kanagawa M."/>
            <person name="Kobayashi K."/>
            <person name="Toda T."/>
            <person name="Senda T."/>
            <person name="Endo T."/>
            <person name="Kato R."/>
        </authorList>
    </citation>
    <scope>X-RAY CRYSTALLOGRAPHY (2.06 ANGSTROMS) OF 45-495 IN COMPLEXES WITH CDP-L-RIBITOL; MAGNESIUM AND ZINC</scope>
    <scope>SUBUNIT</scope>
    <scope>DISULFIDE BOND</scope>
    <scope>GLYCOSYLATION AT ASN-172 AND ASN-209</scope>
    <scope>REGION</scope>
    <scope>MUTAGENESIS OF TYR-88; ASP-360; ASP-362; ASP-364 AND ASP-416</scope>
    <scope>VARIANT MDDGB5 ARG-221</scope>
    <scope>VARIANT MDDGC5 ILE-276</scope>
    <scope>CHARACTERIZATION OF VARIANT MDDGB5 ARG-221</scope>
    <scope>CHARACTERIZATION OF VARIANT MDDGC5 ILE-276</scope>
    <scope>COFACTOR</scope>
    <scope>CATALYTIC ACTIVITY</scope>
    <scope>FUNCTION</scope>
</reference>
<reference key="17">
    <citation type="journal article" date="2001" name="Hum. Mol. Genet.">
        <title>Mutations in the fukutin-related protein gene (FKRP) identify limb girdle muscular dystrophy 2I as a milder allelic variant of congenital muscular dystrophy MDC1C.</title>
        <authorList>
            <person name="Brockington M."/>
            <person name="Yuva Y."/>
            <person name="Prandini P."/>
            <person name="Brown S.C."/>
            <person name="Torelli S."/>
            <person name="Benson M.A."/>
            <person name="Herrmann R."/>
            <person name="Anderson L.V.B."/>
            <person name="Bashir R."/>
            <person name="Burgunder J.-M."/>
            <person name="Fallet S."/>
            <person name="Romero N."/>
            <person name="Fardeau M."/>
            <person name="Straub V."/>
            <person name="Storey G."/>
            <person name="Pollitt C."/>
            <person name="Richard I."/>
            <person name="Sewry C.A."/>
            <person name="Bushby K."/>
            <person name="Voit T."/>
            <person name="Blake D.J."/>
            <person name="Muntoni F."/>
        </authorList>
    </citation>
    <scope>VARIANTS MDDGC5 143-ARG--GLU-146 DEL; SER-143; ILE-276; CYS-312; ARG-316 AND LEU-339</scope>
</reference>
<reference key="18">
    <citation type="journal article" date="2003" name="Ann. Neurol.">
        <title>Phenotypic spectrum associated with mutations in the fukutin-related protein gene.</title>
        <authorList>
            <person name="Mercuri E."/>
            <person name="Brockington M."/>
            <person name="Straub V."/>
            <person name="Quijano-Roy S."/>
            <person name="Yuva Y."/>
            <person name="Herrmann R."/>
            <person name="Brown S.C."/>
            <person name="Torelli S."/>
            <person name="Dubowitz V."/>
            <person name="Blake D.J."/>
            <person name="Romero N.B."/>
            <person name="Estournet B."/>
            <person name="Sewry C.A."/>
            <person name="Guicheney P."/>
            <person name="Voit T."/>
            <person name="Muntoni F."/>
        </authorList>
    </citation>
    <scope>VARIANTS MDDGB5 CYS-309; HIS-339 AND LEU-448</scope>
    <scope>VARIANTS MDDGC5 ILE-276; ASN-307; SER-316; ASN-360 AND SER-462</scope>
</reference>
<reference key="19">
    <citation type="journal article" date="2003" name="Eur. J. Hum. Genet.">
        <title>Asymptomatic carriers for homozygous novel mutations in the FKRP gene: the other end of the spectrum.</title>
        <authorList>
            <person name="de Paula F."/>
            <person name="Vieira N."/>
            <person name="Starling A."/>
            <person name="Yamamoto L.U."/>
            <person name="Lima B."/>
            <person name="de Cassia Pavanello R."/>
            <person name="Vainzof M."/>
            <person name="Nigro V."/>
            <person name="Zatz M."/>
        </authorList>
    </citation>
    <scope>VARIANTS MDDGC5 MET-79; TRP-134; PHE-160; CYS-182; ILE-276; ILE-293; ALA-300; MET-300 AND LEU-358</scope>
</reference>
<reference key="20">
    <citation type="journal article" date="2003" name="Neurology">
        <title>FKRP gene mutations cause congenital muscular dystrophy, mental retardation, and cerebellar cysts.</title>
        <authorList>
            <person name="Topaloglu H."/>
            <person name="Brockington M."/>
            <person name="Yuva Y."/>
            <person name="Talim B."/>
            <person name="Haliloglu G."/>
            <person name="Blake D.J."/>
            <person name="Torelli S."/>
            <person name="Brown S.C."/>
            <person name="Muntoni F."/>
        </authorList>
    </citation>
    <scope>VARIANTS MDDGB5 ARG-221 AND THR-315</scope>
</reference>
<reference key="21">
    <citation type="journal article" date="2004" name="Eur. J. Hum. Genet.">
        <title>Limb-girdle muscular dystrophy 2I: phenotypic variability within a large consanguineous Bedouin family associated with a novel FKRP mutation.</title>
        <authorList>
            <person name="Harel T."/>
            <person name="Goldberg Y."/>
            <person name="Shalev S.A."/>
            <person name="Chervinski I."/>
            <person name="Ofir R."/>
            <person name="Birk O.S."/>
        </authorList>
    </citation>
    <scope>VARIANT MDDGC5 TRP-54</scope>
</reference>
<reference key="22">
    <citation type="journal article" date="2004" name="J. Med. Genet.">
        <title>Mutations in the FKRP gene can cause muscle-eye-brain disease and Walker-Warburg syndrome.</title>
        <authorList>
            <person name="Beltran-Valero de Bernabe D."/>
            <person name="Voit T."/>
            <person name="Longman C."/>
            <person name="Steinbrecher A."/>
            <person name="Straub V."/>
            <person name="Yuva Y."/>
            <person name="Herrmann R."/>
            <person name="Sperner J."/>
            <person name="Korenke C."/>
            <person name="Diesen C."/>
            <person name="Dobyns W.B."/>
            <person name="Brunner H.G."/>
            <person name="van Bokhoven H."/>
            <person name="Brockington M."/>
            <person name="Muntoni F."/>
        </authorList>
    </citation>
    <scope>VARIANTS MDDGA5 ASN-307 AND TYR-318</scope>
</reference>
<reference key="23">
    <citation type="journal article" date="2004" name="Neurogenetics">
        <title>New FKRP mutations causing congenital muscular dystrophy associated with mental retardation and central nervous system abnormalities. Identification of a founder mutation in Tunisian families.</title>
        <authorList>
            <person name="Louhichi N."/>
            <person name="Triki C."/>
            <person name="Quijano-Roy S."/>
            <person name="Richard P."/>
            <person name="Makri S."/>
            <person name="Meziou M."/>
            <person name="Estournet B."/>
            <person name="Mrad S."/>
            <person name="Romero N.B."/>
            <person name="Ayadi H."/>
            <person name="Guicheney P."/>
            <person name="Fakhfakh F."/>
        </authorList>
    </citation>
    <scope>VARIANTS MDDGB5 LEU-405 AND ASP-455</scope>
</reference>
<reference key="24">
    <citation type="journal article" date="2007" name="Neuromuscul. Disord.">
        <title>A novel FKRP mutation in congenital muscular dystrophy disrupts the dystrophin glycoprotein complex.</title>
        <authorList>
            <person name="MacLeod H."/>
            <person name="Pytel P."/>
            <person name="Wollmann R."/>
            <person name="Chelmicka-Schorr E."/>
            <person name="Silver K."/>
            <person name="Anderson R.B."/>
            <person name="Waggoner D."/>
            <person name="McNally E.M."/>
        </authorList>
    </citation>
    <scope>VARIANT MDDGB5 ASP-463</scope>
</reference>
<reference key="25">
    <citation type="journal article" date="2018" name="Physiol. Genomics">
        <title>The impact of PYROXD1 deficiency on cellular respiration and correlations with genetic analyses of limb-girdle muscular dystrophy in Saudi Arabia and Sudan.</title>
        <authorList>
            <person name="Saha M."/>
            <person name="Reddy H.M."/>
            <person name="Salih M."/>
            <person name="Estrella E."/>
            <person name="Jones M.D."/>
            <person name="Mitsuhashi S."/>
            <person name="Cho K.A."/>
            <person name="Suzuki-Hatano S."/>
            <person name="Rizzo S.A."/>
            <person name="Hamad M.H."/>
            <person name="Mukhtar M.M."/>
            <person name="Hamed A.A."/>
            <person name="Elseed M.A."/>
            <person name="Lek M."/>
            <person name="Valkanas E."/>
            <person name="MacArthur D.G."/>
            <person name="Kunkel L.M."/>
            <person name="Pacak C.A."/>
            <person name="Draper I."/>
            <person name="Kang P.B."/>
        </authorList>
    </citation>
    <scope>VARIANT MDDGC5 MET-314</scope>
</reference>
<evidence type="ECO:0000250" key="1">
    <source>
        <dbReference type="UniProtKB" id="Q8CG64"/>
    </source>
</evidence>
<evidence type="ECO:0000255" key="2"/>
<evidence type="ECO:0000269" key="3">
    <source>
    </source>
</evidence>
<evidence type="ECO:0000269" key="4">
    <source>
    </source>
</evidence>
<evidence type="ECO:0000269" key="5">
    <source>
    </source>
</evidence>
<evidence type="ECO:0000269" key="6">
    <source>
    </source>
</evidence>
<evidence type="ECO:0000269" key="7">
    <source>
    </source>
</evidence>
<evidence type="ECO:0000269" key="8">
    <source>
    </source>
</evidence>
<evidence type="ECO:0000269" key="9">
    <source>
    </source>
</evidence>
<evidence type="ECO:0000269" key="10">
    <source>
    </source>
</evidence>
<evidence type="ECO:0000269" key="11">
    <source>
    </source>
</evidence>
<evidence type="ECO:0000269" key="12">
    <source>
    </source>
</evidence>
<evidence type="ECO:0000269" key="13">
    <source>
    </source>
</evidence>
<evidence type="ECO:0000269" key="14">
    <source>
    </source>
</evidence>
<evidence type="ECO:0000269" key="15">
    <source>
    </source>
</evidence>
<evidence type="ECO:0000269" key="16">
    <source>
    </source>
</evidence>
<evidence type="ECO:0000269" key="17">
    <source>
    </source>
</evidence>
<evidence type="ECO:0000269" key="18">
    <source>
    </source>
</evidence>
<evidence type="ECO:0000269" key="19">
    <source>
    </source>
</evidence>
<evidence type="ECO:0000269" key="20">
    <source>
    </source>
</evidence>
<evidence type="ECO:0000269" key="21">
    <source>
    </source>
</evidence>
<evidence type="ECO:0000269" key="22">
    <source>
    </source>
</evidence>
<evidence type="ECO:0000269" key="23">
    <source>
    </source>
</evidence>
<evidence type="ECO:0000303" key="24">
    <source>
    </source>
</evidence>
<evidence type="ECO:0000303" key="25">
    <source>
    </source>
</evidence>
<evidence type="ECO:0000305" key="26"/>
<evidence type="ECO:0000305" key="27">
    <source>
    </source>
</evidence>
<evidence type="ECO:0000312" key="28">
    <source>
        <dbReference type="HGNC" id="HGNC:17997"/>
    </source>
</evidence>
<evidence type="ECO:0007744" key="29">
    <source>
        <dbReference type="PDB" id="6KAJ"/>
    </source>
</evidence>
<evidence type="ECO:0007744" key="30">
    <source>
        <dbReference type="PDB" id="6KAK"/>
    </source>
</evidence>
<evidence type="ECO:0007744" key="31">
    <source>
        <dbReference type="PDB" id="6KAL"/>
    </source>
</evidence>
<evidence type="ECO:0007744" key="32">
    <source>
        <dbReference type="PDB" id="6KAM"/>
    </source>
</evidence>
<evidence type="ECO:0007744" key="33">
    <source>
        <dbReference type="PDB" id="6KAN"/>
    </source>
</evidence>
<evidence type="ECO:0007744" key="34">
    <source>
        <dbReference type="PDB" id="6L7S"/>
    </source>
</evidence>
<evidence type="ECO:0007744" key="35">
    <source>
        <dbReference type="PDB" id="6L7T"/>
    </source>
</evidence>
<evidence type="ECO:0007744" key="36">
    <source>
        <dbReference type="PDB" id="6L7U"/>
    </source>
</evidence>
<evidence type="ECO:0007829" key="37">
    <source>
        <dbReference type="PDB" id="6KAK"/>
    </source>
</evidence>
<evidence type="ECO:0007829" key="38">
    <source>
        <dbReference type="PDB" id="6L7U"/>
    </source>
</evidence>